<sequence>MKNCTLGNETDNSLISNAFGFLRFPLNFQPYSSDADWVITGVPFDMATSGRAGTRHGPGAIRQISTNLAWEGHRWPWHFDMRERLKVVDCGDLVFNFGDAQDMSDKLQAHTEKLLAAGKRCLTFGGDHFVTLPLLRAHAKHFGKMALVHFDAHTDTYANGSKFDHGTMFYHAPNEGLIDPQHSVQIGIRTEHDTNNGFTVLDAAQVNDRGVDDLVAQIKEIVGSLPVYLTFDIDCLDPAFAPGTGTPVVGGLTTDKALKMLRALQPLNIVGMDLVEVSPAYDQSDITALAGATIALDMLYLQAAKK</sequence>
<feature type="chain" id="PRO_0000173738" description="Agmatinase">
    <location>
        <begin position="1"/>
        <end position="306"/>
    </location>
</feature>
<feature type="binding site" evidence="1">
    <location>
        <position position="128"/>
    </location>
    <ligand>
        <name>Mn(2+)</name>
        <dbReference type="ChEBI" id="CHEBI:29035"/>
    </ligand>
</feature>
<feature type="binding site" evidence="1">
    <location>
        <position position="151"/>
    </location>
    <ligand>
        <name>Mn(2+)</name>
        <dbReference type="ChEBI" id="CHEBI:29035"/>
    </ligand>
</feature>
<feature type="binding site" evidence="1">
    <location>
        <position position="153"/>
    </location>
    <ligand>
        <name>Mn(2+)</name>
        <dbReference type="ChEBI" id="CHEBI:29035"/>
    </ligand>
</feature>
<feature type="binding site" evidence="1">
    <location>
        <position position="155"/>
    </location>
    <ligand>
        <name>Mn(2+)</name>
        <dbReference type="ChEBI" id="CHEBI:29035"/>
    </ligand>
</feature>
<feature type="binding site" evidence="1">
    <location>
        <position position="232"/>
    </location>
    <ligand>
        <name>Mn(2+)</name>
        <dbReference type="ChEBI" id="CHEBI:29035"/>
    </ligand>
</feature>
<feature type="binding site" evidence="1">
    <location>
        <position position="234"/>
    </location>
    <ligand>
        <name>Mn(2+)</name>
        <dbReference type="ChEBI" id="CHEBI:29035"/>
    </ligand>
</feature>
<proteinExistence type="inferred from homology"/>
<dbReference type="EC" id="3.5.3.11"/>
<dbReference type="EMBL" id="AY298901">
    <property type="protein sequence ID" value="AAP55488.1"/>
    <property type="status" value="ALT_INIT"/>
    <property type="molecule type" value="Genomic_DNA"/>
</dbReference>
<dbReference type="RefSeq" id="WP_004248574.1">
    <property type="nucleotide sequence ID" value="NZ_WURR01000002.1"/>
</dbReference>
<dbReference type="SMR" id="Q7X3P1"/>
<dbReference type="STRING" id="584.AOUC001_04320"/>
<dbReference type="GeneID" id="6803298"/>
<dbReference type="PATRIC" id="fig|584.106.peg.2571"/>
<dbReference type="OMA" id="YELTTIM"/>
<dbReference type="UniPathway" id="UPA00534">
    <property type="reaction ID" value="UER00287"/>
</dbReference>
<dbReference type="GO" id="GO:0008783">
    <property type="term" value="F:agmatinase activity"/>
    <property type="evidence" value="ECO:0007669"/>
    <property type="project" value="UniProtKB-UniRule"/>
</dbReference>
<dbReference type="GO" id="GO:0030145">
    <property type="term" value="F:manganese ion binding"/>
    <property type="evidence" value="ECO:0007669"/>
    <property type="project" value="InterPro"/>
</dbReference>
<dbReference type="GO" id="GO:0033389">
    <property type="term" value="P:putrescine biosynthetic process from arginine, via agmatine"/>
    <property type="evidence" value="ECO:0007669"/>
    <property type="project" value="TreeGrafter"/>
</dbReference>
<dbReference type="GO" id="GO:0008295">
    <property type="term" value="P:spermidine biosynthetic process"/>
    <property type="evidence" value="ECO:0007669"/>
    <property type="project" value="UniProtKB-UniRule"/>
</dbReference>
<dbReference type="CDD" id="cd11592">
    <property type="entry name" value="Agmatinase_PAH"/>
    <property type="match status" value="1"/>
</dbReference>
<dbReference type="FunFam" id="3.40.800.10:FF:000001">
    <property type="entry name" value="Agmatinase"/>
    <property type="match status" value="1"/>
</dbReference>
<dbReference type="Gene3D" id="3.40.800.10">
    <property type="entry name" value="Ureohydrolase domain"/>
    <property type="match status" value="1"/>
</dbReference>
<dbReference type="HAMAP" id="MF_01418">
    <property type="entry name" value="SpeB"/>
    <property type="match status" value="1"/>
</dbReference>
<dbReference type="InterPro" id="IPR023694">
    <property type="entry name" value="Agmatinase"/>
</dbReference>
<dbReference type="InterPro" id="IPR005925">
    <property type="entry name" value="Agmatinase-rel"/>
</dbReference>
<dbReference type="InterPro" id="IPR006035">
    <property type="entry name" value="Ureohydrolase"/>
</dbReference>
<dbReference type="InterPro" id="IPR023696">
    <property type="entry name" value="Ureohydrolase_dom_sf"/>
</dbReference>
<dbReference type="InterPro" id="IPR020855">
    <property type="entry name" value="Ureohydrolase_Mn_BS"/>
</dbReference>
<dbReference type="NCBIfam" id="TIGR01230">
    <property type="entry name" value="agmatinase"/>
    <property type="match status" value="1"/>
</dbReference>
<dbReference type="NCBIfam" id="NF002564">
    <property type="entry name" value="PRK02190.1"/>
    <property type="match status" value="1"/>
</dbReference>
<dbReference type="PANTHER" id="PTHR11358">
    <property type="entry name" value="ARGINASE/AGMATINASE"/>
    <property type="match status" value="1"/>
</dbReference>
<dbReference type="PANTHER" id="PTHR11358:SF26">
    <property type="entry name" value="GUANIDINO ACID HYDROLASE, MITOCHONDRIAL"/>
    <property type="match status" value="1"/>
</dbReference>
<dbReference type="Pfam" id="PF00491">
    <property type="entry name" value="Arginase"/>
    <property type="match status" value="1"/>
</dbReference>
<dbReference type="PIRSF" id="PIRSF036979">
    <property type="entry name" value="Arginase"/>
    <property type="match status" value="1"/>
</dbReference>
<dbReference type="SUPFAM" id="SSF52768">
    <property type="entry name" value="Arginase/deacetylase"/>
    <property type="match status" value="1"/>
</dbReference>
<dbReference type="PROSITE" id="PS01053">
    <property type="entry name" value="ARGINASE_1"/>
    <property type="match status" value="1"/>
</dbReference>
<dbReference type="PROSITE" id="PS51409">
    <property type="entry name" value="ARGINASE_2"/>
    <property type="match status" value="1"/>
</dbReference>
<gene>
    <name type="primary">speB</name>
</gene>
<organism>
    <name type="scientific">Proteus mirabilis</name>
    <dbReference type="NCBI Taxonomy" id="584"/>
    <lineage>
        <taxon>Bacteria</taxon>
        <taxon>Pseudomonadati</taxon>
        <taxon>Pseudomonadota</taxon>
        <taxon>Gammaproteobacteria</taxon>
        <taxon>Enterobacterales</taxon>
        <taxon>Morganellaceae</taxon>
        <taxon>Proteus</taxon>
    </lineage>
</organism>
<reference key="1">
    <citation type="journal article" date="2004" name="Mol. Microbiol.">
        <title>Evidence that putrescine acts as an extracellular signal required for swarming in Proteus mirabilis.</title>
        <authorList>
            <person name="Sturgill G."/>
            <person name="Rather P.N."/>
        </authorList>
    </citation>
    <scope>NUCLEOTIDE SEQUENCE [GENOMIC DNA]</scope>
    <scope>DISRUPTION PHENOTYPE</scope>
</reference>
<keyword id="KW-0378">Hydrolase</keyword>
<keyword id="KW-0464">Manganese</keyword>
<keyword id="KW-0479">Metal-binding</keyword>
<keyword id="KW-0620">Polyamine biosynthesis</keyword>
<keyword id="KW-0661">Putrescine biosynthesis</keyword>
<keyword id="KW-0745">Spermidine biosynthesis</keyword>
<comment type="function">
    <text evidence="1">Catalyzes the formation of putrescine from agmatine.</text>
</comment>
<comment type="catalytic activity">
    <reaction>
        <text>agmatine + H2O = urea + putrescine</text>
        <dbReference type="Rhea" id="RHEA:13929"/>
        <dbReference type="ChEBI" id="CHEBI:15377"/>
        <dbReference type="ChEBI" id="CHEBI:16199"/>
        <dbReference type="ChEBI" id="CHEBI:58145"/>
        <dbReference type="ChEBI" id="CHEBI:326268"/>
        <dbReference type="EC" id="3.5.3.11"/>
    </reaction>
</comment>
<comment type="cofactor">
    <cofactor evidence="1">
        <name>Mn(2+)</name>
        <dbReference type="ChEBI" id="CHEBI:29035"/>
    </cofactor>
</comment>
<comment type="pathway">
    <text>Amine and polyamine biosynthesis; putrescine biosynthesis via agmatine pathway; putrescine from agmatine: step 1/1.</text>
</comment>
<comment type="disruption phenotype">
    <text evidence="2">Cells show a delay in differentiation to swarmer cells and are unable to migrate effectively on agar surfaces. Putrescine restores normal cell differentiation and migration ability.</text>
</comment>
<comment type="similarity">
    <text evidence="3">Belongs to the arginase family. Agmatinase subfamily.</text>
</comment>
<comment type="sequence caution" evidence="3">
    <conflict type="erroneous initiation">
        <sequence resource="EMBL-CDS" id="AAP55488"/>
    </conflict>
</comment>
<accession>Q7X3P1</accession>
<evidence type="ECO:0000250" key="1"/>
<evidence type="ECO:0000269" key="2">
    <source>
    </source>
</evidence>
<evidence type="ECO:0000305" key="3"/>
<protein>
    <recommendedName>
        <fullName>Agmatinase</fullName>
        <ecNumber>3.5.3.11</ecNumber>
    </recommendedName>
    <alternativeName>
        <fullName>Agmatine ureohydrolase</fullName>
        <shortName>AUH</shortName>
    </alternativeName>
</protein>
<name>SPEB_PROMI</name>